<dbReference type="EMBL" id="CP000247">
    <property type="protein sequence ID" value="ABG72404.1"/>
    <property type="molecule type" value="Genomic_DNA"/>
</dbReference>
<dbReference type="RefSeq" id="WP_000331457.1">
    <property type="nucleotide sequence ID" value="NC_008253.1"/>
</dbReference>
<dbReference type="SMR" id="Q0T9H5"/>
<dbReference type="KEGG" id="ecp:ECP_4463"/>
<dbReference type="HOGENOM" id="CLU_076075_2_0_6"/>
<dbReference type="Proteomes" id="UP000009182">
    <property type="component" value="Chromosome"/>
</dbReference>
<dbReference type="GO" id="GO:0005737">
    <property type="term" value="C:cytoplasm"/>
    <property type="evidence" value="ECO:0007669"/>
    <property type="project" value="UniProtKB-SubCell"/>
</dbReference>
<dbReference type="GO" id="GO:0046872">
    <property type="term" value="F:metal ion binding"/>
    <property type="evidence" value="ECO:0007669"/>
    <property type="project" value="UniProtKB-KW"/>
</dbReference>
<dbReference type="GO" id="GO:0030091">
    <property type="term" value="P:protein repair"/>
    <property type="evidence" value="ECO:0007669"/>
    <property type="project" value="UniProtKB-UniRule"/>
</dbReference>
<dbReference type="GO" id="GO:0051409">
    <property type="term" value="P:response to nitrosative stress"/>
    <property type="evidence" value="ECO:0007669"/>
    <property type="project" value="UniProtKB-UniRule"/>
</dbReference>
<dbReference type="GO" id="GO:0006979">
    <property type="term" value="P:response to oxidative stress"/>
    <property type="evidence" value="ECO:0007669"/>
    <property type="project" value="UniProtKB-UniRule"/>
</dbReference>
<dbReference type="CDD" id="cd12108">
    <property type="entry name" value="Hr-like"/>
    <property type="match status" value="1"/>
</dbReference>
<dbReference type="FunFam" id="1.20.120.520:FF:000001">
    <property type="entry name" value="Iron-sulfur cluster repair protein YtfE"/>
    <property type="match status" value="1"/>
</dbReference>
<dbReference type="Gene3D" id="1.20.120.520">
    <property type="entry name" value="nmb1532 protein domain like"/>
    <property type="match status" value="1"/>
</dbReference>
<dbReference type="HAMAP" id="MF_01606">
    <property type="entry name" value="RIC_YtfE"/>
    <property type="match status" value="1"/>
</dbReference>
<dbReference type="InterPro" id="IPR023742">
    <property type="entry name" value="FeS-repair_YftE"/>
</dbReference>
<dbReference type="InterPro" id="IPR012312">
    <property type="entry name" value="Hemerythrin-like"/>
</dbReference>
<dbReference type="InterPro" id="IPR019903">
    <property type="entry name" value="RIC_family"/>
</dbReference>
<dbReference type="NCBIfam" id="TIGR03652">
    <property type="entry name" value="FeS_repair_RIC"/>
    <property type="match status" value="1"/>
</dbReference>
<dbReference type="NCBIfam" id="NF008221">
    <property type="entry name" value="PRK10992.1"/>
    <property type="match status" value="1"/>
</dbReference>
<dbReference type="PANTHER" id="PTHR36438">
    <property type="entry name" value="IRON-SULFUR CLUSTER REPAIR PROTEIN YTFE"/>
    <property type="match status" value="1"/>
</dbReference>
<dbReference type="PANTHER" id="PTHR36438:SF1">
    <property type="entry name" value="IRON-SULFUR CLUSTER REPAIR PROTEIN YTFE"/>
    <property type="match status" value="1"/>
</dbReference>
<dbReference type="Pfam" id="PF01814">
    <property type="entry name" value="Hemerythrin"/>
    <property type="match status" value="1"/>
</dbReference>
<dbReference type="Pfam" id="PF04405">
    <property type="entry name" value="ScdA_N"/>
    <property type="match status" value="1"/>
</dbReference>
<organism>
    <name type="scientific">Escherichia coli O6:K15:H31 (strain 536 / UPEC)</name>
    <dbReference type="NCBI Taxonomy" id="362663"/>
    <lineage>
        <taxon>Bacteria</taxon>
        <taxon>Pseudomonadati</taxon>
        <taxon>Pseudomonadota</taxon>
        <taxon>Gammaproteobacteria</taxon>
        <taxon>Enterobacterales</taxon>
        <taxon>Enterobacteriaceae</taxon>
        <taxon>Escherichia</taxon>
    </lineage>
</organism>
<proteinExistence type="inferred from homology"/>
<gene>
    <name evidence="1" type="primary">ytfE</name>
    <name type="ordered locus">ECP_4463</name>
</gene>
<reference key="1">
    <citation type="journal article" date="2006" name="Mol. Microbiol.">
        <title>Role of pathogenicity island-associated integrases in the genome plasticity of uropathogenic Escherichia coli strain 536.</title>
        <authorList>
            <person name="Hochhut B."/>
            <person name="Wilde C."/>
            <person name="Balling G."/>
            <person name="Middendorf B."/>
            <person name="Dobrindt U."/>
            <person name="Brzuszkiewicz E."/>
            <person name="Gottschalk G."/>
            <person name="Carniel E."/>
            <person name="Hacker J."/>
        </authorList>
    </citation>
    <scope>NUCLEOTIDE SEQUENCE [LARGE SCALE GENOMIC DNA]</scope>
    <source>
        <strain>536 / UPEC</strain>
    </source>
</reference>
<accession>Q0T9H5</accession>
<sequence>MAYRDQPLGELALSIPRASALFRKYDMDYCCGGKQTLARAAARKELDVEVIEAELAKLAEQPIEKDWRSAPLAEIIDHIIVRYHDRHREQLPELILQATKVERVHADKPSVPKGLTKYLTMLHEELSSHMMKEEQILFPMIKQGMGSQAMGPISVMESEHDEAGELLEVIKHTTNNVTPPPEACTTWKAMYNGINELIDDLMEHISLENNVLFPRALAGE</sequence>
<protein>
    <recommendedName>
        <fullName evidence="1">Iron-sulfur cluster repair protein YtfE</fullName>
    </recommendedName>
</protein>
<feature type="chain" id="PRO_0000291698" description="Iron-sulfur cluster repair protein YtfE">
    <location>
        <begin position="1"/>
        <end position="220"/>
    </location>
</feature>
<evidence type="ECO:0000255" key="1">
    <source>
        <dbReference type="HAMAP-Rule" id="MF_01606"/>
    </source>
</evidence>
<keyword id="KW-0963">Cytoplasm</keyword>
<keyword id="KW-0408">Iron</keyword>
<keyword id="KW-0479">Metal-binding</keyword>
<keyword id="KW-0346">Stress response</keyword>
<name>YTFE_ECOL5</name>
<comment type="function">
    <text evidence="1">Di-iron-containing protein involved in the repair of iron-sulfur clusters damaged by oxidative and nitrosative stress conditions.</text>
</comment>
<comment type="subunit">
    <text evidence="1">Homodimer.</text>
</comment>
<comment type="subcellular location">
    <subcellularLocation>
        <location evidence="1">Cytoplasm</location>
    </subcellularLocation>
</comment>
<comment type="similarity">
    <text evidence="1">Belongs to the RIC family. YtfE subfamily.</text>
</comment>